<feature type="chain" id="PRO_0000056151" description="Postreplication repair E3 ubiquitin-protein ligase RAD18">
    <location>
        <begin position="1"/>
        <end position="443"/>
    </location>
</feature>
<feature type="domain" description="SAP" evidence="3">
    <location>
        <begin position="270"/>
        <end position="304"/>
    </location>
</feature>
<feature type="zinc finger region" description="RING-type" evidence="2">
    <location>
        <begin position="32"/>
        <end position="70"/>
    </location>
</feature>
<feature type="zinc finger region" description="UBZ4-type" evidence="4">
    <location>
        <begin position="178"/>
        <end position="206"/>
    </location>
</feature>
<feature type="region of interest" description="Disordered" evidence="5">
    <location>
        <begin position="410"/>
        <end position="443"/>
    </location>
</feature>
<feature type="compositionally biased region" description="Polar residues" evidence="5">
    <location>
        <begin position="410"/>
        <end position="424"/>
    </location>
</feature>
<feature type="binding site" evidence="4">
    <location>
        <position position="181"/>
    </location>
    <ligand>
        <name>Zn(2+)</name>
        <dbReference type="ChEBI" id="CHEBI:29105"/>
    </ligand>
</feature>
<feature type="binding site" evidence="4">
    <location>
        <position position="184"/>
    </location>
    <ligand>
        <name>Zn(2+)</name>
        <dbReference type="ChEBI" id="CHEBI:29105"/>
    </ligand>
</feature>
<feature type="binding site" evidence="4">
    <location>
        <position position="197"/>
    </location>
    <ligand>
        <name>Zn(2+)</name>
        <dbReference type="ChEBI" id="CHEBI:29105"/>
    </ligand>
</feature>
<feature type="binding site" evidence="4">
    <location>
        <position position="201"/>
    </location>
    <ligand>
        <name>Zn(2+)</name>
        <dbReference type="ChEBI" id="CHEBI:29105"/>
    </ligand>
</feature>
<accession>Q75EN0</accession>
<name>RAD18_EREGS</name>
<comment type="function">
    <text evidence="1">E3 RING-finger protein, member of the UBC2/RAD6 epistasis group. Associates to the E2 ubiquitin conjugating enzyme UBC2/RAD6 to form the UBC2-RAD18 ubiquitin ligase complex involved in postreplicative repair (PRR) of damaged DNA.</text>
</comment>
<comment type="catalytic activity">
    <reaction>
        <text>S-ubiquitinyl-[E2 ubiquitin-conjugating enzyme]-L-cysteine + [acceptor protein]-L-lysine = [E2 ubiquitin-conjugating enzyme]-L-cysteine + N(6)-ubiquitinyl-[acceptor protein]-L-lysine.</text>
        <dbReference type="EC" id="2.3.2.27"/>
    </reaction>
</comment>
<comment type="pathway">
    <text>Protein modification; protein ubiquitination.</text>
</comment>
<comment type="subunit">
    <text evidence="1">Interacts with E2 UBC2, forming a complex with ubiquitin ligase activity.</text>
</comment>
<comment type="subcellular location">
    <subcellularLocation>
        <location evidence="1">Nucleus</location>
    </subcellularLocation>
</comment>
<comment type="similarity">
    <text evidence="6">Belongs to the RAD18 family.</text>
</comment>
<organism>
    <name type="scientific">Eremothecium gossypii (strain ATCC 10895 / CBS 109.51 / FGSC 9923 / NRRL Y-1056)</name>
    <name type="common">Yeast</name>
    <name type="synonym">Ashbya gossypii</name>
    <dbReference type="NCBI Taxonomy" id="284811"/>
    <lineage>
        <taxon>Eukaryota</taxon>
        <taxon>Fungi</taxon>
        <taxon>Dikarya</taxon>
        <taxon>Ascomycota</taxon>
        <taxon>Saccharomycotina</taxon>
        <taxon>Saccharomycetes</taxon>
        <taxon>Saccharomycetales</taxon>
        <taxon>Saccharomycetaceae</taxon>
        <taxon>Eremothecium</taxon>
    </lineage>
</organism>
<proteinExistence type="inferred from homology"/>
<evidence type="ECO:0000250" key="1"/>
<evidence type="ECO:0000255" key="2">
    <source>
        <dbReference type="PROSITE-ProRule" id="PRU00175"/>
    </source>
</evidence>
<evidence type="ECO:0000255" key="3">
    <source>
        <dbReference type="PROSITE-ProRule" id="PRU00186"/>
    </source>
</evidence>
<evidence type="ECO:0000255" key="4">
    <source>
        <dbReference type="PROSITE-ProRule" id="PRU01256"/>
    </source>
</evidence>
<evidence type="ECO:0000256" key="5">
    <source>
        <dbReference type="SAM" id="MobiDB-lite"/>
    </source>
</evidence>
<evidence type="ECO:0000305" key="6"/>
<protein>
    <recommendedName>
        <fullName>Postreplication repair E3 ubiquitin-protein ligase RAD18</fullName>
        <ecNumber>2.3.2.27</ecNumber>
    </recommendedName>
    <alternativeName>
        <fullName evidence="6">RING-type E3 ubiquitin transferase RAD18</fullName>
    </alternativeName>
</protein>
<dbReference type="EC" id="2.3.2.27"/>
<dbReference type="EMBL" id="AE016814">
    <property type="protein sequence ID" value="AAS50414.1"/>
    <property type="molecule type" value="Genomic_DNA"/>
</dbReference>
<dbReference type="RefSeq" id="NP_982590.1">
    <property type="nucleotide sequence ID" value="NM_207943.1"/>
</dbReference>
<dbReference type="SMR" id="Q75EN0"/>
<dbReference type="FunCoup" id="Q75EN0">
    <property type="interactions" value="325"/>
</dbReference>
<dbReference type="STRING" id="284811.Q75EN0"/>
<dbReference type="EnsemblFungi" id="AAS50414">
    <property type="protein sequence ID" value="AAS50414"/>
    <property type="gene ID" value="AGOS_AAR049C"/>
</dbReference>
<dbReference type="GeneID" id="4618439"/>
<dbReference type="KEGG" id="ago:AGOS_AAR049C"/>
<dbReference type="eggNOG" id="KOG0287">
    <property type="taxonomic scope" value="Eukaryota"/>
</dbReference>
<dbReference type="HOGENOM" id="CLU_028491_2_0_1"/>
<dbReference type="InParanoid" id="Q75EN0"/>
<dbReference type="OMA" id="IPNTGPR"/>
<dbReference type="OrthoDB" id="9049620at2759"/>
<dbReference type="UniPathway" id="UPA00143"/>
<dbReference type="Proteomes" id="UP000000591">
    <property type="component" value="Chromosome I"/>
</dbReference>
<dbReference type="GO" id="GO:0000785">
    <property type="term" value="C:chromatin"/>
    <property type="evidence" value="ECO:0007669"/>
    <property type="project" value="EnsemblFungi"/>
</dbReference>
<dbReference type="GO" id="GO:0005634">
    <property type="term" value="C:nucleus"/>
    <property type="evidence" value="ECO:0000318"/>
    <property type="project" value="GO_Central"/>
</dbReference>
<dbReference type="GO" id="GO:0097505">
    <property type="term" value="C:Rad6-Rad18 complex"/>
    <property type="evidence" value="ECO:0000318"/>
    <property type="project" value="GO_Central"/>
</dbReference>
<dbReference type="GO" id="GO:0003697">
    <property type="term" value="F:single-stranded DNA binding"/>
    <property type="evidence" value="ECO:0007669"/>
    <property type="project" value="EnsemblFungi"/>
</dbReference>
<dbReference type="GO" id="GO:0017116">
    <property type="term" value="F:single-stranded DNA helicase activity"/>
    <property type="evidence" value="ECO:0007669"/>
    <property type="project" value="EnsemblFungi"/>
</dbReference>
<dbReference type="GO" id="GO:0061630">
    <property type="term" value="F:ubiquitin protein ligase activity"/>
    <property type="evidence" value="ECO:0007669"/>
    <property type="project" value="InterPro"/>
</dbReference>
<dbReference type="GO" id="GO:0008270">
    <property type="term" value="F:zinc ion binding"/>
    <property type="evidence" value="ECO:0007669"/>
    <property type="project" value="UniProtKB-KW"/>
</dbReference>
<dbReference type="GO" id="GO:0042275">
    <property type="term" value="P:error-free postreplication DNA repair"/>
    <property type="evidence" value="ECO:0007669"/>
    <property type="project" value="EnsemblFungi"/>
</dbReference>
<dbReference type="GO" id="GO:0070987">
    <property type="term" value="P:error-free translesion synthesis"/>
    <property type="evidence" value="ECO:0007669"/>
    <property type="project" value="EnsemblFungi"/>
</dbReference>
<dbReference type="GO" id="GO:0042276">
    <property type="term" value="P:error-prone translesion synthesis"/>
    <property type="evidence" value="ECO:0007669"/>
    <property type="project" value="EnsemblFungi"/>
</dbReference>
<dbReference type="GO" id="GO:0006301">
    <property type="term" value="P:postreplication repair"/>
    <property type="evidence" value="ECO:0000318"/>
    <property type="project" value="GO_Central"/>
</dbReference>
<dbReference type="GO" id="GO:0006513">
    <property type="term" value="P:protein monoubiquitination"/>
    <property type="evidence" value="ECO:0000318"/>
    <property type="project" value="GO_Central"/>
</dbReference>
<dbReference type="FunFam" id="3.30.40.10:FF:000172">
    <property type="entry name" value="E3 ubiquitin-protein ligase RAD18"/>
    <property type="match status" value="1"/>
</dbReference>
<dbReference type="Gene3D" id="3.30.40.10">
    <property type="entry name" value="Zinc/RING finger domain, C3HC4 (zinc finger)"/>
    <property type="match status" value="1"/>
</dbReference>
<dbReference type="InterPro" id="IPR039577">
    <property type="entry name" value="Rad18"/>
</dbReference>
<dbReference type="InterPro" id="IPR004580">
    <property type="entry name" value="Rad18_fungi"/>
</dbReference>
<dbReference type="InterPro" id="IPR006642">
    <property type="entry name" value="Rad18_UBZ4"/>
</dbReference>
<dbReference type="InterPro" id="IPR003034">
    <property type="entry name" value="SAP_dom"/>
</dbReference>
<dbReference type="InterPro" id="IPR001841">
    <property type="entry name" value="Znf_RING"/>
</dbReference>
<dbReference type="InterPro" id="IPR013083">
    <property type="entry name" value="Znf_RING/FYVE/PHD"/>
</dbReference>
<dbReference type="InterPro" id="IPR017907">
    <property type="entry name" value="Znf_RING_CS"/>
</dbReference>
<dbReference type="NCBIfam" id="TIGR00599">
    <property type="entry name" value="rad18"/>
    <property type="match status" value="1"/>
</dbReference>
<dbReference type="PANTHER" id="PTHR14134">
    <property type="entry name" value="E3 UBIQUITIN-PROTEIN LIGASE RAD18"/>
    <property type="match status" value="1"/>
</dbReference>
<dbReference type="PANTHER" id="PTHR14134:SF2">
    <property type="entry name" value="E3 UBIQUITIN-PROTEIN LIGASE RAD18"/>
    <property type="match status" value="1"/>
</dbReference>
<dbReference type="Pfam" id="PF02037">
    <property type="entry name" value="SAP"/>
    <property type="match status" value="1"/>
</dbReference>
<dbReference type="Pfam" id="PF13923">
    <property type="entry name" value="zf-C3HC4_2"/>
    <property type="match status" value="1"/>
</dbReference>
<dbReference type="SMART" id="SM00184">
    <property type="entry name" value="RING"/>
    <property type="match status" value="1"/>
</dbReference>
<dbReference type="SMART" id="SM00513">
    <property type="entry name" value="SAP"/>
    <property type="match status" value="1"/>
</dbReference>
<dbReference type="SMART" id="SM00734">
    <property type="entry name" value="ZnF_Rad18"/>
    <property type="match status" value="1"/>
</dbReference>
<dbReference type="SUPFAM" id="SSF57850">
    <property type="entry name" value="RING/U-box"/>
    <property type="match status" value="1"/>
</dbReference>
<dbReference type="PROSITE" id="PS50800">
    <property type="entry name" value="SAP"/>
    <property type="match status" value="1"/>
</dbReference>
<dbReference type="PROSITE" id="PS00518">
    <property type="entry name" value="ZF_RING_1"/>
    <property type="match status" value="1"/>
</dbReference>
<dbReference type="PROSITE" id="PS50089">
    <property type="entry name" value="ZF_RING_2"/>
    <property type="match status" value="1"/>
</dbReference>
<dbReference type="PROSITE" id="PS51908">
    <property type="entry name" value="ZF_UBZ4"/>
    <property type="match status" value="1"/>
</dbReference>
<gene>
    <name type="primary">RAD18</name>
    <name type="ordered locus">AAR049C</name>
</gene>
<reference key="1">
    <citation type="journal article" date="2004" name="Science">
        <title>The Ashbya gossypii genome as a tool for mapping the ancient Saccharomyces cerevisiae genome.</title>
        <authorList>
            <person name="Dietrich F.S."/>
            <person name="Voegeli S."/>
            <person name="Brachat S."/>
            <person name="Lerch A."/>
            <person name="Gates K."/>
            <person name="Steiner S."/>
            <person name="Mohr C."/>
            <person name="Poehlmann R."/>
            <person name="Luedi P."/>
            <person name="Choi S."/>
            <person name="Wing R.A."/>
            <person name="Flavier A."/>
            <person name="Gaffney T.D."/>
            <person name="Philippsen P."/>
        </authorList>
    </citation>
    <scope>NUCLEOTIDE SEQUENCE [LARGE SCALE GENOMIC DNA]</scope>
    <source>
        <strain>ATCC 10895 / CBS 109.51 / FGSC 9923 / NRRL Y-1056</strain>
    </source>
</reference>
<reference key="2">
    <citation type="journal article" date="2013" name="G3 (Bethesda)">
        <title>Genomes of Ashbya fungi isolated from insects reveal four mating-type loci, numerous translocations, lack of transposons, and distinct gene duplications.</title>
        <authorList>
            <person name="Dietrich F.S."/>
            <person name="Voegeli S."/>
            <person name="Kuo S."/>
            <person name="Philippsen P."/>
        </authorList>
    </citation>
    <scope>GENOME REANNOTATION</scope>
    <source>
        <strain>ATCC 10895 / CBS 109.51 / FGSC 9923 / NRRL Y-1056</strain>
    </source>
</reference>
<sequence length="443" mass="49688">MSIQPGQVVTDPSDFAGTTIPELADLDSLLRCHICKDMLQTPVLTQCGHTFCSLCIREYLNKESRCPLCLAELRQNMLQKEFLVGELAACYMELRARLLETVRIPPKKVAEVVQNNSPIELDSDGEVEIIESCTGAVPGSKRGSPQVEEVEAAAKRQRTKQNGIQYMLQKKPKAVGEKVPCPICNRLYNKEFLERVHLDECLMMGTLRESGESDITVIEQQSYTAEPDSKNSHVAERRGESPVDEVVTHKESYLGSGLRVTKSRLPKLHFTSLSTSQLKQKLSELGLPTAGSRQQMINRYNHYELLWNSNFLDSIQPVGEGELRRSLLSWEATRNTDTPISSGVSSSITNMLKTNNSASTLLKSFKTDKFDKSAWSRLHGKEFRRLIRAAKKSMLEQDRGEAITAQNNELSTKASVDMESTSFRNDTNDTIDTVTDEVHEDLK</sequence>
<keyword id="KW-0227">DNA damage</keyword>
<keyword id="KW-0234">DNA repair</keyword>
<keyword id="KW-0238">DNA-binding</keyword>
<keyword id="KW-0479">Metal-binding</keyword>
<keyword id="KW-0539">Nucleus</keyword>
<keyword id="KW-1185">Reference proteome</keyword>
<keyword id="KW-0808">Transferase</keyword>
<keyword id="KW-0833">Ubl conjugation pathway</keyword>
<keyword id="KW-0862">Zinc</keyword>
<keyword id="KW-0863">Zinc-finger</keyword>